<proteinExistence type="inferred from homology"/>
<gene>
    <name evidence="1" type="primary">coaD</name>
    <name type="ordered locus">lpl0590</name>
</gene>
<sequence length="170" mass="19231">MQMVINEMKQKAIYPGTFDPVTNGHIDIITRASTIFPELIVAVASNKNKRPYLSWESRISLLEESVGHLTGVRVVGFDNLLIDFVLEQNAGIILRGLRAVSDFEYEFQLAGMNRKLSKKVETLFLTPAEHLMYISSTLVREIAALNGDISQFVPPNVVRELKKRQNERSL</sequence>
<feature type="chain" id="PRO_0000156226" description="Phosphopantetheine adenylyltransferase">
    <location>
        <begin position="1"/>
        <end position="170"/>
    </location>
</feature>
<feature type="binding site" evidence="1">
    <location>
        <begin position="17"/>
        <end position="18"/>
    </location>
    <ligand>
        <name>ATP</name>
        <dbReference type="ChEBI" id="CHEBI:30616"/>
    </ligand>
</feature>
<feature type="binding site" evidence="1">
    <location>
        <position position="17"/>
    </location>
    <ligand>
        <name>substrate</name>
    </ligand>
</feature>
<feature type="binding site" evidence="1">
    <location>
        <position position="25"/>
    </location>
    <ligand>
        <name>ATP</name>
        <dbReference type="ChEBI" id="CHEBI:30616"/>
    </ligand>
</feature>
<feature type="binding site" evidence="1">
    <location>
        <position position="49"/>
    </location>
    <ligand>
        <name>substrate</name>
    </ligand>
</feature>
<feature type="binding site" evidence="1">
    <location>
        <position position="81"/>
    </location>
    <ligand>
        <name>substrate</name>
    </ligand>
</feature>
<feature type="binding site" evidence="1">
    <location>
        <position position="95"/>
    </location>
    <ligand>
        <name>substrate</name>
    </ligand>
</feature>
<feature type="binding site" evidence="1">
    <location>
        <begin position="96"/>
        <end position="98"/>
    </location>
    <ligand>
        <name>ATP</name>
        <dbReference type="ChEBI" id="CHEBI:30616"/>
    </ligand>
</feature>
<feature type="binding site" evidence="1">
    <location>
        <position position="106"/>
    </location>
    <ligand>
        <name>ATP</name>
        <dbReference type="ChEBI" id="CHEBI:30616"/>
    </ligand>
</feature>
<feature type="binding site" evidence="1">
    <location>
        <begin position="131"/>
        <end position="137"/>
    </location>
    <ligand>
        <name>ATP</name>
        <dbReference type="ChEBI" id="CHEBI:30616"/>
    </ligand>
</feature>
<feature type="site" description="Transition state stabilizer" evidence="1">
    <location>
        <position position="25"/>
    </location>
</feature>
<dbReference type="EC" id="2.7.7.3" evidence="1"/>
<dbReference type="EMBL" id="CR628337">
    <property type="protein sequence ID" value="CAH14821.1"/>
    <property type="molecule type" value="Genomic_DNA"/>
</dbReference>
<dbReference type="RefSeq" id="WP_011214781.1">
    <property type="nucleotide sequence ID" value="NC_006369.1"/>
</dbReference>
<dbReference type="SMR" id="Q5WYZ4"/>
<dbReference type="GeneID" id="57034546"/>
<dbReference type="KEGG" id="lpf:lpl0590"/>
<dbReference type="LegioList" id="lpl0590"/>
<dbReference type="HOGENOM" id="CLU_100149_0_1_6"/>
<dbReference type="UniPathway" id="UPA00241">
    <property type="reaction ID" value="UER00355"/>
</dbReference>
<dbReference type="Proteomes" id="UP000002517">
    <property type="component" value="Chromosome"/>
</dbReference>
<dbReference type="GO" id="GO:0005737">
    <property type="term" value="C:cytoplasm"/>
    <property type="evidence" value="ECO:0007669"/>
    <property type="project" value="UniProtKB-SubCell"/>
</dbReference>
<dbReference type="GO" id="GO:0005524">
    <property type="term" value="F:ATP binding"/>
    <property type="evidence" value="ECO:0007669"/>
    <property type="project" value="UniProtKB-KW"/>
</dbReference>
<dbReference type="GO" id="GO:0004595">
    <property type="term" value="F:pantetheine-phosphate adenylyltransferase activity"/>
    <property type="evidence" value="ECO:0007669"/>
    <property type="project" value="UniProtKB-UniRule"/>
</dbReference>
<dbReference type="GO" id="GO:0015937">
    <property type="term" value="P:coenzyme A biosynthetic process"/>
    <property type="evidence" value="ECO:0007669"/>
    <property type="project" value="UniProtKB-UniRule"/>
</dbReference>
<dbReference type="CDD" id="cd02163">
    <property type="entry name" value="PPAT"/>
    <property type="match status" value="1"/>
</dbReference>
<dbReference type="Gene3D" id="3.40.50.620">
    <property type="entry name" value="HUPs"/>
    <property type="match status" value="1"/>
</dbReference>
<dbReference type="HAMAP" id="MF_00151">
    <property type="entry name" value="PPAT_bact"/>
    <property type="match status" value="1"/>
</dbReference>
<dbReference type="InterPro" id="IPR004821">
    <property type="entry name" value="Cyt_trans-like"/>
</dbReference>
<dbReference type="InterPro" id="IPR001980">
    <property type="entry name" value="PPAT"/>
</dbReference>
<dbReference type="InterPro" id="IPR014729">
    <property type="entry name" value="Rossmann-like_a/b/a_fold"/>
</dbReference>
<dbReference type="NCBIfam" id="TIGR01510">
    <property type="entry name" value="coaD_prev_kdtB"/>
    <property type="match status" value="1"/>
</dbReference>
<dbReference type="NCBIfam" id="TIGR00125">
    <property type="entry name" value="cyt_tran_rel"/>
    <property type="match status" value="1"/>
</dbReference>
<dbReference type="PANTHER" id="PTHR21342">
    <property type="entry name" value="PHOSPHOPANTETHEINE ADENYLYLTRANSFERASE"/>
    <property type="match status" value="1"/>
</dbReference>
<dbReference type="PANTHER" id="PTHR21342:SF1">
    <property type="entry name" value="PHOSPHOPANTETHEINE ADENYLYLTRANSFERASE"/>
    <property type="match status" value="1"/>
</dbReference>
<dbReference type="Pfam" id="PF01467">
    <property type="entry name" value="CTP_transf_like"/>
    <property type="match status" value="1"/>
</dbReference>
<dbReference type="PRINTS" id="PR01020">
    <property type="entry name" value="LPSBIOSNTHSS"/>
</dbReference>
<dbReference type="SUPFAM" id="SSF52374">
    <property type="entry name" value="Nucleotidylyl transferase"/>
    <property type="match status" value="1"/>
</dbReference>
<accession>Q5WYZ4</accession>
<comment type="function">
    <text evidence="1">Reversibly transfers an adenylyl group from ATP to 4'-phosphopantetheine, yielding dephospho-CoA (dPCoA) and pyrophosphate.</text>
</comment>
<comment type="catalytic activity">
    <reaction evidence="1">
        <text>(R)-4'-phosphopantetheine + ATP + H(+) = 3'-dephospho-CoA + diphosphate</text>
        <dbReference type="Rhea" id="RHEA:19801"/>
        <dbReference type="ChEBI" id="CHEBI:15378"/>
        <dbReference type="ChEBI" id="CHEBI:30616"/>
        <dbReference type="ChEBI" id="CHEBI:33019"/>
        <dbReference type="ChEBI" id="CHEBI:57328"/>
        <dbReference type="ChEBI" id="CHEBI:61723"/>
        <dbReference type="EC" id="2.7.7.3"/>
    </reaction>
</comment>
<comment type="cofactor">
    <cofactor evidence="1">
        <name>Mg(2+)</name>
        <dbReference type="ChEBI" id="CHEBI:18420"/>
    </cofactor>
</comment>
<comment type="pathway">
    <text evidence="1">Cofactor biosynthesis; coenzyme A biosynthesis; CoA from (R)-pantothenate: step 4/5.</text>
</comment>
<comment type="subunit">
    <text evidence="1">Homohexamer.</text>
</comment>
<comment type="subcellular location">
    <subcellularLocation>
        <location evidence="1">Cytoplasm</location>
    </subcellularLocation>
</comment>
<comment type="similarity">
    <text evidence="1">Belongs to the bacterial CoaD family.</text>
</comment>
<protein>
    <recommendedName>
        <fullName evidence="1">Phosphopantetheine adenylyltransferase</fullName>
        <ecNumber evidence="1">2.7.7.3</ecNumber>
    </recommendedName>
    <alternativeName>
        <fullName evidence="1">Dephospho-CoA pyrophosphorylase</fullName>
    </alternativeName>
    <alternativeName>
        <fullName evidence="1">Pantetheine-phosphate adenylyltransferase</fullName>
        <shortName evidence="1">PPAT</shortName>
    </alternativeName>
</protein>
<organism>
    <name type="scientific">Legionella pneumophila (strain Lens)</name>
    <dbReference type="NCBI Taxonomy" id="297245"/>
    <lineage>
        <taxon>Bacteria</taxon>
        <taxon>Pseudomonadati</taxon>
        <taxon>Pseudomonadota</taxon>
        <taxon>Gammaproteobacteria</taxon>
        <taxon>Legionellales</taxon>
        <taxon>Legionellaceae</taxon>
        <taxon>Legionella</taxon>
    </lineage>
</organism>
<keyword id="KW-0067">ATP-binding</keyword>
<keyword id="KW-0173">Coenzyme A biosynthesis</keyword>
<keyword id="KW-0963">Cytoplasm</keyword>
<keyword id="KW-0460">Magnesium</keyword>
<keyword id="KW-0547">Nucleotide-binding</keyword>
<keyword id="KW-0548">Nucleotidyltransferase</keyword>
<keyword id="KW-0808">Transferase</keyword>
<reference key="1">
    <citation type="journal article" date="2004" name="Nat. Genet.">
        <title>Evidence in the Legionella pneumophila genome for exploitation of host cell functions and high genome plasticity.</title>
        <authorList>
            <person name="Cazalet C."/>
            <person name="Rusniok C."/>
            <person name="Brueggemann H."/>
            <person name="Zidane N."/>
            <person name="Magnier A."/>
            <person name="Ma L."/>
            <person name="Tichit M."/>
            <person name="Jarraud S."/>
            <person name="Bouchier C."/>
            <person name="Vandenesch F."/>
            <person name="Kunst F."/>
            <person name="Etienne J."/>
            <person name="Glaser P."/>
            <person name="Buchrieser C."/>
        </authorList>
    </citation>
    <scope>NUCLEOTIDE SEQUENCE [LARGE SCALE GENOMIC DNA]</scope>
    <source>
        <strain>Lens</strain>
    </source>
</reference>
<name>COAD_LEGPL</name>
<evidence type="ECO:0000255" key="1">
    <source>
        <dbReference type="HAMAP-Rule" id="MF_00151"/>
    </source>
</evidence>